<comment type="function">
    <text evidence="1">Excises uracil residues from the DNA which can arise as a result of misincorporation of dUMP residues by DNA polymerase or due to deamination of cytosine.</text>
</comment>
<comment type="catalytic activity">
    <reaction>
        <text>Hydrolyzes single-stranded DNA or mismatched double-stranded DNA and polynucleotides, releasing free uracil.</text>
        <dbReference type="EC" id="3.2.2.27"/>
    </reaction>
</comment>
<comment type="subcellular location">
    <subcellularLocation>
        <location evidence="1">Cytoplasm</location>
    </subcellularLocation>
</comment>
<comment type="similarity">
    <text evidence="2">Belongs to the uracil-DNA glycosylase (UDG) superfamily. UNG family.</text>
</comment>
<dbReference type="EC" id="3.2.2.27"/>
<dbReference type="EMBL" id="AL583923">
    <property type="protein sequence ID" value="CAC30628.1"/>
    <property type="molecule type" value="Genomic_DNA"/>
</dbReference>
<dbReference type="PIR" id="E87118">
    <property type="entry name" value="E87118"/>
</dbReference>
<dbReference type="RefSeq" id="NP_302149.1">
    <property type="nucleotide sequence ID" value="NC_002677.1"/>
</dbReference>
<dbReference type="RefSeq" id="WP_010908470.1">
    <property type="nucleotide sequence ID" value="NC_002677.1"/>
</dbReference>
<dbReference type="SMR" id="Q9CBS3"/>
<dbReference type="STRING" id="272631.gene:17575518"/>
<dbReference type="KEGG" id="mle:ML1675"/>
<dbReference type="PATRIC" id="fig|272631.5.peg.3167"/>
<dbReference type="Leproma" id="ML1675"/>
<dbReference type="eggNOG" id="COG0692">
    <property type="taxonomic scope" value="Bacteria"/>
</dbReference>
<dbReference type="HOGENOM" id="CLU_032162_3_1_11"/>
<dbReference type="OrthoDB" id="9804372at2"/>
<dbReference type="Proteomes" id="UP000000806">
    <property type="component" value="Chromosome"/>
</dbReference>
<dbReference type="GO" id="GO:0005737">
    <property type="term" value="C:cytoplasm"/>
    <property type="evidence" value="ECO:0007669"/>
    <property type="project" value="UniProtKB-SubCell"/>
</dbReference>
<dbReference type="GO" id="GO:0004844">
    <property type="term" value="F:uracil DNA N-glycosylase activity"/>
    <property type="evidence" value="ECO:0007669"/>
    <property type="project" value="UniProtKB-UniRule"/>
</dbReference>
<dbReference type="GO" id="GO:0097510">
    <property type="term" value="P:base-excision repair, AP site formation via deaminated base removal"/>
    <property type="evidence" value="ECO:0007669"/>
    <property type="project" value="TreeGrafter"/>
</dbReference>
<dbReference type="CDD" id="cd10027">
    <property type="entry name" value="UDG-F1-like"/>
    <property type="match status" value="1"/>
</dbReference>
<dbReference type="FunFam" id="3.40.470.10:FF:000006">
    <property type="entry name" value="Uracil-DNA glycosylase"/>
    <property type="match status" value="1"/>
</dbReference>
<dbReference type="Gene3D" id="3.40.470.10">
    <property type="entry name" value="Uracil-DNA glycosylase-like domain"/>
    <property type="match status" value="1"/>
</dbReference>
<dbReference type="HAMAP" id="MF_00148">
    <property type="entry name" value="UDG"/>
    <property type="match status" value="1"/>
</dbReference>
<dbReference type="InterPro" id="IPR002043">
    <property type="entry name" value="UDG_fam1"/>
</dbReference>
<dbReference type="InterPro" id="IPR018085">
    <property type="entry name" value="Ura-DNA_Glyclase_AS"/>
</dbReference>
<dbReference type="InterPro" id="IPR005122">
    <property type="entry name" value="Uracil-DNA_glycosylase-like"/>
</dbReference>
<dbReference type="InterPro" id="IPR036895">
    <property type="entry name" value="Uracil-DNA_glycosylase-like_sf"/>
</dbReference>
<dbReference type="NCBIfam" id="NF003588">
    <property type="entry name" value="PRK05254.1-1"/>
    <property type="match status" value="1"/>
</dbReference>
<dbReference type="NCBIfam" id="NF003592">
    <property type="entry name" value="PRK05254.1-5"/>
    <property type="match status" value="1"/>
</dbReference>
<dbReference type="NCBIfam" id="TIGR00628">
    <property type="entry name" value="ung"/>
    <property type="match status" value="1"/>
</dbReference>
<dbReference type="PANTHER" id="PTHR11264">
    <property type="entry name" value="URACIL-DNA GLYCOSYLASE"/>
    <property type="match status" value="1"/>
</dbReference>
<dbReference type="PANTHER" id="PTHR11264:SF0">
    <property type="entry name" value="URACIL-DNA GLYCOSYLASE"/>
    <property type="match status" value="1"/>
</dbReference>
<dbReference type="Pfam" id="PF03167">
    <property type="entry name" value="UDG"/>
    <property type="match status" value="1"/>
</dbReference>
<dbReference type="SMART" id="SM00986">
    <property type="entry name" value="UDG"/>
    <property type="match status" value="1"/>
</dbReference>
<dbReference type="SMART" id="SM00987">
    <property type="entry name" value="UreE_C"/>
    <property type="match status" value="1"/>
</dbReference>
<dbReference type="SUPFAM" id="SSF52141">
    <property type="entry name" value="Uracil-DNA glycosylase-like"/>
    <property type="match status" value="1"/>
</dbReference>
<dbReference type="PROSITE" id="PS00130">
    <property type="entry name" value="U_DNA_GLYCOSYLASE"/>
    <property type="match status" value="1"/>
</dbReference>
<accession>Q9CBS3</accession>
<organism>
    <name type="scientific">Mycobacterium leprae (strain TN)</name>
    <dbReference type="NCBI Taxonomy" id="272631"/>
    <lineage>
        <taxon>Bacteria</taxon>
        <taxon>Bacillati</taxon>
        <taxon>Actinomycetota</taxon>
        <taxon>Actinomycetes</taxon>
        <taxon>Mycobacteriales</taxon>
        <taxon>Mycobacteriaceae</taxon>
        <taxon>Mycobacterium</taxon>
    </lineage>
</organism>
<feature type="chain" id="PRO_0000176118" description="Uracil-DNA glycosylase">
    <location>
        <begin position="1"/>
        <end position="227"/>
    </location>
</feature>
<feature type="active site" description="Proton acceptor" evidence="1">
    <location>
        <position position="68"/>
    </location>
</feature>
<gene>
    <name type="primary">ung</name>
    <name type="ordered locus">ML1675</name>
</gene>
<proteinExistence type="inferred from homology"/>
<reference key="1">
    <citation type="journal article" date="2001" name="Nature">
        <title>Massive gene decay in the leprosy bacillus.</title>
        <authorList>
            <person name="Cole S.T."/>
            <person name="Eiglmeier K."/>
            <person name="Parkhill J."/>
            <person name="James K.D."/>
            <person name="Thomson N.R."/>
            <person name="Wheeler P.R."/>
            <person name="Honore N."/>
            <person name="Garnier T."/>
            <person name="Churcher C.M."/>
            <person name="Harris D.E."/>
            <person name="Mungall K.L."/>
            <person name="Basham D."/>
            <person name="Brown D."/>
            <person name="Chillingworth T."/>
            <person name="Connor R."/>
            <person name="Davies R.M."/>
            <person name="Devlin K."/>
            <person name="Duthoy S."/>
            <person name="Feltwell T."/>
            <person name="Fraser A."/>
            <person name="Hamlin N."/>
            <person name="Holroyd S."/>
            <person name="Hornsby T."/>
            <person name="Jagels K."/>
            <person name="Lacroix C."/>
            <person name="Maclean J."/>
            <person name="Moule S."/>
            <person name="Murphy L.D."/>
            <person name="Oliver K."/>
            <person name="Quail M.A."/>
            <person name="Rajandream M.A."/>
            <person name="Rutherford K.M."/>
            <person name="Rutter S."/>
            <person name="Seeger K."/>
            <person name="Simon S."/>
            <person name="Simmonds M."/>
            <person name="Skelton J."/>
            <person name="Squares R."/>
            <person name="Squares S."/>
            <person name="Stevens K."/>
            <person name="Taylor K."/>
            <person name="Whitehead S."/>
            <person name="Woodward J.R."/>
            <person name="Barrell B.G."/>
        </authorList>
    </citation>
    <scope>NUCLEOTIDE SEQUENCE [LARGE SCALE GENOMIC DNA]</scope>
    <source>
        <strain>TN</strain>
    </source>
</reference>
<name>UNG_MYCLE</name>
<keyword id="KW-0963">Cytoplasm</keyword>
<keyword id="KW-0227">DNA damage</keyword>
<keyword id="KW-0234">DNA repair</keyword>
<keyword id="KW-0378">Hydrolase</keyword>
<keyword id="KW-1185">Reference proteome</keyword>
<sequence length="227" mass="24655">MTARPLSELVEQGWAAALEPVVDQVAEMGRFLRAEIAAGRRYLPAGHSVLRAFTYPFDNVRVLIVGQDPYPTPGHAVGLSFSVAPDVRPLPRSLANVFDEYTADLGYPLPVCGDLTPWAQRGVLLLNRVLTVRPSNPASHRGKGWEVITECAIRALAARSEPMVAILWGRDAATLKPLLTVDNCVVIESPHPSPLSASRGFFGSRPFSRTNEILVGMGAGPINWRLP</sequence>
<evidence type="ECO:0000250" key="1"/>
<evidence type="ECO:0000305" key="2"/>
<protein>
    <recommendedName>
        <fullName>Uracil-DNA glycosylase</fullName>
        <shortName>UDG</shortName>
        <ecNumber>3.2.2.27</ecNumber>
    </recommendedName>
</protein>